<proteinExistence type="inferred from homology"/>
<name>MTAP_FUSV7</name>
<feature type="chain" id="PRO_0000415129" description="S-methyl-5'-thioadenosine phosphorylase">
    <location>
        <begin position="1"/>
        <end position="307"/>
    </location>
</feature>
<feature type="binding site" evidence="1">
    <location>
        <position position="20"/>
    </location>
    <ligand>
        <name>phosphate</name>
        <dbReference type="ChEBI" id="CHEBI:43474"/>
    </ligand>
</feature>
<feature type="binding site" evidence="1">
    <location>
        <begin position="62"/>
        <end position="63"/>
    </location>
    <ligand>
        <name>phosphate</name>
        <dbReference type="ChEBI" id="CHEBI:43474"/>
    </ligand>
</feature>
<feature type="binding site" evidence="1">
    <location>
        <begin position="95"/>
        <end position="96"/>
    </location>
    <ligand>
        <name>phosphate</name>
        <dbReference type="ChEBI" id="CHEBI:43474"/>
    </ligand>
</feature>
<feature type="binding site" evidence="1">
    <location>
        <position position="197"/>
    </location>
    <ligand>
        <name>substrate</name>
    </ligand>
</feature>
<feature type="binding site" evidence="1">
    <location>
        <position position="198"/>
    </location>
    <ligand>
        <name>phosphate</name>
        <dbReference type="ChEBI" id="CHEBI:43474"/>
    </ligand>
</feature>
<feature type="binding site" evidence="1">
    <location>
        <begin position="221"/>
        <end position="223"/>
    </location>
    <ligand>
        <name>substrate</name>
    </ligand>
</feature>
<feature type="site" description="Important for substrate specificity" evidence="1">
    <location>
        <position position="179"/>
    </location>
</feature>
<feature type="site" description="Important for substrate specificity" evidence="1">
    <location>
        <position position="233"/>
    </location>
</feature>
<keyword id="KW-0963">Cytoplasm</keyword>
<keyword id="KW-0328">Glycosyltransferase</keyword>
<keyword id="KW-0539">Nucleus</keyword>
<keyword id="KW-0660">Purine salvage</keyword>
<keyword id="KW-1185">Reference proteome</keyword>
<keyword id="KW-0808">Transferase</keyword>
<gene>
    <name type="ORF">NECHADRAFT_67177</name>
</gene>
<accession>C7YLQ3</accession>
<comment type="function">
    <text evidence="1">Catalyzes the reversible phosphorylation of S-methyl-5'-thioadenosine (MTA) to adenine and 5-methylthioribose-1-phosphate. Involved in the breakdown of MTA, a major by-product of polyamine biosynthesis. Responsible for the first step in the methionine salvage pathway after MTA has been generated from S-adenosylmethionine. Has broad substrate specificity with 6-aminopurine nucleosides as preferred substrates.</text>
</comment>
<comment type="catalytic activity">
    <reaction evidence="1">
        <text>S-methyl-5'-thioadenosine + phosphate = 5-(methylsulfanyl)-alpha-D-ribose 1-phosphate + adenine</text>
        <dbReference type="Rhea" id="RHEA:11852"/>
        <dbReference type="ChEBI" id="CHEBI:16708"/>
        <dbReference type="ChEBI" id="CHEBI:17509"/>
        <dbReference type="ChEBI" id="CHEBI:43474"/>
        <dbReference type="ChEBI" id="CHEBI:58533"/>
        <dbReference type="EC" id="2.4.2.28"/>
    </reaction>
</comment>
<comment type="pathway">
    <text evidence="1">Amino-acid biosynthesis; L-methionine biosynthesis via salvage pathway; S-methyl-5-thio-alpha-D-ribose 1-phosphate from S-methyl-5'-thioadenosine (phosphorylase route): step 1/1.</text>
</comment>
<comment type="subunit">
    <text evidence="1">Homotrimer.</text>
</comment>
<comment type="subcellular location">
    <subcellularLocation>
        <location evidence="1">Cytoplasm</location>
    </subcellularLocation>
    <subcellularLocation>
        <location evidence="1">Nucleus</location>
    </subcellularLocation>
</comment>
<comment type="similarity">
    <text evidence="1">Belongs to the PNP/MTAP phosphorylase family. MTAP subfamily.</text>
</comment>
<reference key="1">
    <citation type="journal article" date="2009" name="PLoS Genet.">
        <title>The genome of Nectria haematococca: contribution of supernumerary chromosomes to gene expansion.</title>
        <authorList>
            <person name="Coleman J.J."/>
            <person name="Rounsley S.D."/>
            <person name="Rodriguez-Carres M."/>
            <person name="Kuo A."/>
            <person name="Wasmann C.C."/>
            <person name="Grimwood J."/>
            <person name="Schmutz J."/>
            <person name="Taga M."/>
            <person name="White G.J."/>
            <person name="Zhou S."/>
            <person name="Schwartz D.C."/>
            <person name="Freitag M."/>
            <person name="Ma L.-J."/>
            <person name="Danchin E.G.J."/>
            <person name="Henrissat B."/>
            <person name="Coutinho P.M."/>
            <person name="Nelson D.R."/>
            <person name="Straney D."/>
            <person name="Napoli C.A."/>
            <person name="Barker B.M."/>
            <person name="Gribskov M."/>
            <person name="Rep M."/>
            <person name="Kroken S."/>
            <person name="Molnar I."/>
            <person name="Rensing C."/>
            <person name="Kennell J.C."/>
            <person name="Zamora J."/>
            <person name="Farman M.L."/>
            <person name="Selker E.U."/>
            <person name="Salamov A."/>
            <person name="Shapiro H."/>
            <person name="Pangilinan J."/>
            <person name="Lindquist E."/>
            <person name="Lamers C."/>
            <person name="Grigoriev I.V."/>
            <person name="Geiser D.M."/>
            <person name="Covert S.F."/>
            <person name="Temporini E."/>
            <person name="VanEtten H.D."/>
        </authorList>
    </citation>
    <scope>NUCLEOTIDE SEQUENCE [LARGE SCALE GENOMIC DNA]</scope>
    <source>
        <strain>ATCC MYA-4622 / CBS 123669 / FGSC 9596 / NRRL 45880 / 77-13-4</strain>
    </source>
</reference>
<organism>
    <name type="scientific">Fusarium vanettenii (strain ATCC MYA-4622 / CBS 123669 / FGSC 9596 / NRRL 45880 / 77-13-4)</name>
    <name type="common">Fusarium solani subsp. pisi</name>
    <dbReference type="NCBI Taxonomy" id="660122"/>
    <lineage>
        <taxon>Eukaryota</taxon>
        <taxon>Fungi</taxon>
        <taxon>Dikarya</taxon>
        <taxon>Ascomycota</taxon>
        <taxon>Pezizomycotina</taxon>
        <taxon>Sordariomycetes</taxon>
        <taxon>Hypocreomycetidae</taxon>
        <taxon>Hypocreales</taxon>
        <taxon>Nectriaceae</taxon>
        <taxon>Fusarium</taxon>
        <taxon>Fusarium solani species complex</taxon>
        <taxon>Fusarium vanettenii</taxon>
    </lineage>
</organism>
<sequence length="307" mass="33543">MGDLPTTFDKPVHIAVIGGTGLGQLEGFEPIAALNPITPWGAPASPIQILSHKGVNVAFLARHGIHHQFAPHEVPNRANIAALRHIGVRCVIAFSAVGSLQEEIKPMDFVVPDQVIDRTKGVRPFTFFEGGVVGHVGFADPFDAGLAKVVKTCAEHMEGDGVVLHEKGTVIVMEGPQFSTRAESHMYRSWGGSVINMSTLPEAKLAREAEMAYQVIAMATDYDCWHSFEDVNVEMVGKYMKANSKNAKRLVGAVLDRLADLDNSDLVLAKHWQGASQGAVKFMTKPEGRDPEAMKRVEYLFPGFWEE</sequence>
<dbReference type="EC" id="2.4.2.28" evidence="1"/>
<dbReference type="EMBL" id="GG698897">
    <property type="protein sequence ID" value="EEU47310.1"/>
    <property type="molecule type" value="Genomic_DNA"/>
</dbReference>
<dbReference type="RefSeq" id="XP_003053023.1">
    <property type="nucleotide sequence ID" value="XM_003052977.1"/>
</dbReference>
<dbReference type="SMR" id="C7YLQ3"/>
<dbReference type="FunCoup" id="C7YLQ3">
    <property type="interactions" value="426"/>
</dbReference>
<dbReference type="STRING" id="660122.C7YLQ3"/>
<dbReference type="EnsemblFungi" id="NechaT67177">
    <property type="protein sequence ID" value="NechaP67177"/>
    <property type="gene ID" value="NechaG67177"/>
</dbReference>
<dbReference type="GeneID" id="9663789"/>
<dbReference type="KEGG" id="nhe:NECHADRAFT_67177"/>
<dbReference type="VEuPathDB" id="FungiDB:NECHADRAFT_67177"/>
<dbReference type="eggNOG" id="KOG3985">
    <property type="taxonomic scope" value="Eukaryota"/>
</dbReference>
<dbReference type="HOGENOM" id="CLU_054456_0_1_1"/>
<dbReference type="InParanoid" id="C7YLQ3"/>
<dbReference type="OMA" id="ADPFCPE"/>
<dbReference type="OrthoDB" id="431409at2759"/>
<dbReference type="UniPathway" id="UPA00904">
    <property type="reaction ID" value="UER00873"/>
</dbReference>
<dbReference type="Proteomes" id="UP000005206">
    <property type="component" value="Unassembled WGS sequence"/>
</dbReference>
<dbReference type="GO" id="GO:0005829">
    <property type="term" value="C:cytosol"/>
    <property type="evidence" value="ECO:0007669"/>
    <property type="project" value="TreeGrafter"/>
</dbReference>
<dbReference type="GO" id="GO:0005634">
    <property type="term" value="C:nucleus"/>
    <property type="evidence" value="ECO:0007669"/>
    <property type="project" value="UniProtKB-SubCell"/>
</dbReference>
<dbReference type="GO" id="GO:0003729">
    <property type="term" value="F:mRNA binding"/>
    <property type="evidence" value="ECO:0007669"/>
    <property type="project" value="EnsemblFungi"/>
</dbReference>
<dbReference type="GO" id="GO:0017061">
    <property type="term" value="F:S-methyl-5-thioadenosine phosphorylase activity"/>
    <property type="evidence" value="ECO:0007669"/>
    <property type="project" value="UniProtKB-UniRule"/>
</dbReference>
<dbReference type="GO" id="GO:0006537">
    <property type="term" value="P:glutamate biosynthetic process"/>
    <property type="evidence" value="ECO:0007669"/>
    <property type="project" value="EnsemblFungi"/>
</dbReference>
<dbReference type="GO" id="GO:0019509">
    <property type="term" value="P:L-methionine salvage from methylthioadenosine"/>
    <property type="evidence" value="ECO:0007669"/>
    <property type="project" value="UniProtKB-UniRule"/>
</dbReference>
<dbReference type="GO" id="GO:0006166">
    <property type="term" value="P:purine ribonucleoside salvage"/>
    <property type="evidence" value="ECO:0007669"/>
    <property type="project" value="UniProtKB-KW"/>
</dbReference>
<dbReference type="CDD" id="cd09010">
    <property type="entry name" value="MTAP_SsMTAPII_like_MTIP"/>
    <property type="match status" value="1"/>
</dbReference>
<dbReference type="FunFam" id="3.40.50.1580:FF:000008">
    <property type="entry name" value="S-methyl-5'-thioadenosine phosphorylase"/>
    <property type="match status" value="1"/>
</dbReference>
<dbReference type="Gene3D" id="3.40.50.1580">
    <property type="entry name" value="Nucleoside phosphorylase domain"/>
    <property type="match status" value="1"/>
</dbReference>
<dbReference type="HAMAP" id="MF_01963">
    <property type="entry name" value="MTAP"/>
    <property type="match status" value="1"/>
</dbReference>
<dbReference type="InterPro" id="IPR010044">
    <property type="entry name" value="MTAP"/>
</dbReference>
<dbReference type="InterPro" id="IPR000845">
    <property type="entry name" value="Nucleoside_phosphorylase_d"/>
</dbReference>
<dbReference type="InterPro" id="IPR035994">
    <property type="entry name" value="Nucleoside_phosphorylase_sf"/>
</dbReference>
<dbReference type="InterPro" id="IPR018099">
    <property type="entry name" value="Purine_phosphorylase-2_CS"/>
</dbReference>
<dbReference type="NCBIfam" id="TIGR01694">
    <property type="entry name" value="MTAP"/>
    <property type="match status" value="1"/>
</dbReference>
<dbReference type="PANTHER" id="PTHR42679">
    <property type="entry name" value="S-METHYL-5'-THIOADENOSINE PHOSPHORYLASE"/>
    <property type="match status" value="1"/>
</dbReference>
<dbReference type="PANTHER" id="PTHR42679:SF2">
    <property type="entry name" value="S-METHYL-5'-THIOADENOSINE PHOSPHORYLASE"/>
    <property type="match status" value="1"/>
</dbReference>
<dbReference type="Pfam" id="PF01048">
    <property type="entry name" value="PNP_UDP_1"/>
    <property type="match status" value="1"/>
</dbReference>
<dbReference type="SUPFAM" id="SSF53167">
    <property type="entry name" value="Purine and uridine phosphorylases"/>
    <property type="match status" value="1"/>
</dbReference>
<dbReference type="PROSITE" id="PS01240">
    <property type="entry name" value="PNP_MTAP_2"/>
    <property type="match status" value="1"/>
</dbReference>
<protein>
    <recommendedName>
        <fullName evidence="1">S-methyl-5'-thioadenosine phosphorylase</fullName>
        <ecNumber evidence="1">2.4.2.28</ecNumber>
    </recommendedName>
    <alternativeName>
        <fullName evidence="1">5'-methylthioadenosine phosphorylase</fullName>
        <shortName evidence="1">MTA phosphorylase</shortName>
        <shortName evidence="1">MTAP</shortName>
        <shortName evidence="1">MTAPase</shortName>
    </alternativeName>
</protein>
<evidence type="ECO:0000255" key="1">
    <source>
        <dbReference type="HAMAP-Rule" id="MF_03155"/>
    </source>
</evidence>